<feature type="chain" id="PRO_1000147366" description="RNase adapter protein RapZ">
    <location>
        <begin position="1"/>
        <end position="284"/>
    </location>
</feature>
<feature type="region of interest" description="RNA-binding" evidence="1">
    <location>
        <begin position="266"/>
        <end position="284"/>
    </location>
</feature>
<feature type="binding site" evidence="1">
    <location>
        <begin position="8"/>
        <end position="15"/>
    </location>
    <ligand>
        <name>ATP</name>
        <dbReference type="ChEBI" id="CHEBI:30616"/>
    </ligand>
</feature>
<feature type="binding site" evidence="1">
    <location>
        <begin position="56"/>
        <end position="59"/>
    </location>
    <ligand>
        <name>GTP</name>
        <dbReference type="ChEBI" id="CHEBI:37565"/>
    </ligand>
</feature>
<proteinExistence type="inferred from homology"/>
<keyword id="KW-0067">ATP-binding</keyword>
<keyword id="KW-0342">GTP-binding</keyword>
<keyword id="KW-0547">Nucleotide-binding</keyword>
<keyword id="KW-0694">RNA-binding</keyword>
<gene>
    <name evidence="1" type="primary">rapZ</name>
    <name type="ordered locus">SPC_3393</name>
</gene>
<dbReference type="EMBL" id="CP000857">
    <property type="protein sequence ID" value="ACN47478.1"/>
    <property type="molecule type" value="Genomic_DNA"/>
</dbReference>
<dbReference type="RefSeq" id="WP_000243749.1">
    <property type="nucleotide sequence ID" value="NC_012125.1"/>
</dbReference>
<dbReference type="SMR" id="C0PZL8"/>
<dbReference type="KEGG" id="sei:SPC_3393"/>
<dbReference type="HOGENOM" id="CLU_059558_1_1_6"/>
<dbReference type="Proteomes" id="UP000001599">
    <property type="component" value="Chromosome"/>
</dbReference>
<dbReference type="GO" id="GO:0005524">
    <property type="term" value="F:ATP binding"/>
    <property type="evidence" value="ECO:0007669"/>
    <property type="project" value="UniProtKB-UniRule"/>
</dbReference>
<dbReference type="GO" id="GO:0005525">
    <property type="term" value="F:GTP binding"/>
    <property type="evidence" value="ECO:0007669"/>
    <property type="project" value="UniProtKB-UniRule"/>
</dbReference>
<dbReference type="GO" id="GO:0003723">
    <property type="term" value="F:RNA binding"/>
    <property type="evidence" value="ECO:0007669"/>
    <property type="project" value="UniProtKB-KW"/>
</dbReference>
<dbReference type="Gene3D" id="3.40.50.300">
    <property type="entry name" value="P-loop containing nucleotide triphosphate hydrolases"/>
    <property type="match status" value="1"/>
</dbReference>
<dbReference type="HAMAP" id="MF_00636">
    <property type="entry name" value="RapZ_like"/>
    <property type="match status" value="1"/>
</dbReference>
<dbReference type="InterPro" id="IPR027417">
    <property type="entry name" value="P-loop_NTPase"/>
</dbReference>
<dbReference type="InterPro" id="IPR005337">
    <property type="entry name" value="RapZ-like"/>
</dbReference>
<dbReference type="InterPro" id="IPR053930">
    <property type="entry name" value="RapZ-like_N"/>
</dbReference>
<dbReference type="InterPro" id="IPR053931">
    <property type="entry name" value="RapZ_C"/>
</dbReference>
<dbReference type="NCBIfam" id="NF003828">
    <property type="entry name" value="PRK05416.1"/>
    <property type="match status" value="1"/>
</dbReference>
<dbReference type="PANTHER" id="PTHR30448">
    <property type="entry name" value="RNASE ADAPTER PROTEIN RAPZ"/>
    <property type="match status" value="1"/>
</dbReference>
<dbReference type="PANTHER" id="PTHR30448:SF0">
    <property type="entry name" value="RNASE ADAPTER PROTEIN RAPZ"/>
    <property type="match status" value="1"/>
</dbReference>
<dbReference type="Pfam" id="PF22740">
    <property type="entry name" value="PapZ_C"/>
    <property type="match status" value="1"/>
</dbReference>
<dbReference type="Pfam" id="PF03668">
    <property type="entry name" value="RapZ-like_N"/>
    <property type="match status" value="1"/>
</dbReference>
<dbReference type="PIRSF" id="PIRSF005052">
    <property type="entry name" value="P-loopkin"/>
    <property type="match status" value="1"/>
</dbReference>
<dbReference type="SUPFAM" id="SSF52540">
    <property type="entry name" value="P-loop containing nucleoside triphosphate hydrolases"/>
    <property type="match status" value="1"/>
</dbReference>
<sequence length="284" mass="32464">MVLMIVSGRSGSGKSVALRALEDMGFYCVDNLPVVLLPDLARTLADRQISAAVSIDVRNMPESPEIFEQAMNNLPGAFSPQLLFLDADRNTLIRRYSDTRRLHPLSSKNLSLESAIDKESDLLEPLRSRADLIVDTSEMSVHELAEMLRTRLLGKRERELTMVFESFGFKHGIPIDADYVFDVRFLPNPHWDPKLRPMTGLDKPVAAFLDRHTEVHNFIYQTRSYLELWLPMLETNNRSYLTVAIGCTGGKHRSVYIAEQLADYFRSRGKNVQSRHRTLEKRKT</sequence>
<organism>
    <name type="scientific">Salmonella paratyphi C (strain RKS4594)</name>
    <dbReference type="NCBI Taxonomy" id="476213"/>
    <lineage>
        <taxon>Bacteria</taxon>
        <taxon>Pseudomonadati</taxon>
        <taxon>Pseudomonadota</taxon>
        <taxon>Gammaproteobacteria</taxon>
        <taxon>Enterobacterales</taxon>
        <taxon>Enterobacteriaceae</taxon>
        <taxon>Salmonella</taxon>
    </lineage>
</organism>
<reference key="1">
    <citation type="journal article" date="2009" name="PLoS ONE">
        <title>Salmonella paratyphi C: genetic divergence from Salmonella choleraesuis and pathogenic convergence with Salmonella typhi.</title>
        <authorList>
            <person name="Liu W.-Q."/>
            <person name="Feng Y."/>
            <person name="Wang Y."/>
            <person name="Zou Q.-H."/>
            <person name="Chen F."/>
            <person name="Guo J.-T."/>
            <person name="Peng Y.-H."/>
            <person name="Jin Y."/>
            <person name="Li Y.-G."/>
            <person name="Hu S.-N."/>
            <person name="Johnston R.N."/>
            <person name="Liu G.-R."/>
            <person name="Liu S.-L."/>
        </authorList>
    </citation>
    <scope>NUCLEOTIDE SEQUENCE [LARGE SCALE GENOMIC DNA]</scope>
    <source>
        <strain>RKS4594</strain>
    </source>
</reference>
<comment type="function">
    <text evidence="1">Modulates the synthesis of GlmS, by affecting the processing and stability of the regulatory small RNA GlmZ. When glucosamine-6-phosphate (GlcN6P) concentrations are high in the cell, RapZ binds GlmZ and targets it to cleavage by RNase E. Consequently, GlmZ is inactivated and unable to activate GlmS synthesis. Under low GlcN6P concentrations, RapZ is sequestered and inactivated by an other regulatory small RNA, GlmY, preventing GlmZ degradation and leading to synthesis of GlmS.</text>
</comment>
<comment type="subunit">
    <text evidence="1">Homotrimer.</text>
</comment>
<comment type="similarity">
    <text evidence="1">Belongs to the RapZ-like family. RapZ subfamily.</text>
</comment>
<protein>
    <recommendedName>
        <fullName evidence="1">RNase adapter protein RapZ</fullName>
    </recommendedName>
</protein>
<accession>C0PZL8</accession>
<name>RAPZ_SALPC</name>
<evidence type="ECO:0000255" key="1">
    <source>
        <dbReference type="HAMAP-Rule" id="MF_00636"/>
    </source>
</evidence>